<protein>
    <recommendedName>
        <fullName evidence="1">Membrane protein</fullName>
        <shortName evidence="1">M protein</shortName>
    </recommendedName>
    <alternativeName>
        <fullName evidence="1">E1 glycoprotein</fullName>
    </alternativeName>
    <alternativeName>
        <fullName evidence="1">Matrix glycoprotein</fullName>
    </alternativeName>
    <alternativeName>
        <fullName evidence="1">Membrane glycoprotein</fullName>
    </alternativeName>
</protein>
<name>VME1_IBVBU</name>
<organism>
    <name type="scientific">Avian infectious bronchitis virus (strain Beaudette US)</name>
    <name type="common">IBV</name>
    <dbReference type="NCBI Taxonomy" id="160750"/>
    <lineage>
        <taxon>Viruses</taxon>
        <taxon>Riboviria</taxon>
        <taxon>Orthornavirae</taxon>
        <taxon>Pisuviricota</taxon>
        <taxon>Pisoniviricetes</taxon>
        <taxon>Nidovirales</taxon>
        <taxon>Cornidovirineae</taxon>
        <taxon>Coronaviridae</taxon>
        <taxon>Orthocoronavirinae</taxon>
        <taxon>Gammacoronavirus</taxon>
        <taxon>Igacovirus</taxon>
        <taxon>Avian coronavirus</taxon>
    </lineage>
</organism>
<reference key="1">
    <citation type="journal article" date="2001" name="J. Virol.">
        <title>Reverse genetics system for the avian coronavirus infectious bronchitis virus.</title>
        <authorList>
            <person name="Casais R."/>
            <person name="Thiel V."/>
            <person name="Siddell S.G."/>
            <person name="Cavanagh D."/>
            <person name="Britton P."/>
        </authorList>
    </citation>
    <scope>NUCLEOTIDE SEQUENCE [GENOMIC RNA]</scope>
</reference>
<sequence>MPNETNCTLDFEQSVQLFKEYNLFITAFLLFLTIILQYGYATRTKVIYTLKMIVLWCFWPLNIAVGVISCTYPPNTGGLVVAIILTVFACLSFVGYWIQSIRLFKRCRSWWSFNPESNAVGSILLTNGQQCNFAIESVPMVLSPIIKNGVLYCEGQWLAKCEPDHLPKDIFVCTPDRRNIYRMVQKYTGDQSGNKKRFATFVYAKQSVDTGELESVATGGSSLYT</sequence>
<dbReference type="EMBL" id="AJ311362">
    <property type="protein sequence ID" value="CAC39304.1"/>
    <property type="molecule type" value="Genomic_RNA"/>
</dbReference>
<dbReference type="SMR" id="Q91QS9"/>
<dbReference type="GO" id="GO:0044178">
    <property type="term" value="C:host cell Golgi membrane"/>
    <property type="evidence" value="ECO:0007669"/>
    <property type="project" value="UniProtKB-SubCell"/>
</dbReference>
<dbReference type="GO" id="GO:0016020">
    <property type="term" value="C:membrane"/>
    <property type="evidence" value="ECO:0007669"/>
    <property type="project" value="UniProtKB-UniRule"/>
</dbReference>
<dbReference type="GO" id="GO:0019031">
    <property type="term" value="C:viral envelope"/>
    <property type="evidence" value="ECO:0007669"/>
    <property type="project" value="UniProtKB-UniRule"/>
</dbReference>
<dbReference type="GO" id="GO:0055036">
    <property type="term" value="C:virion membrane"/>
    <property type="evidence" value="ECO:0007669"/>
    <property type="project" value="UniProtKB-SubCell"/>
</dbReference>
<dbReference type="GO" id="GO:0039660">
    <property type="term" value="F:structural constituent of virion"/>
    <property type="evidence" value="ECO:0007669"/>
    <property type="project" value="UniProtKB-UniRule"/>
</dbReference>
<dbReference type="CDD" id="cd21566">
    <property type="entry name" value="gammaCoV_M"/>
    <property type="match status" value="1"/>
</dbReference>
<dbReference type="HAMAP" id="MF_04203">
    <property type="entry name" value="GAMMA_CORONA_M"/>
    <property type="match status" value="1"/>
</dbReference>
<dbReference type="InterPro" id="IPR042550">
    <property type="entry name" value="GAMMA_CORONA_M"/>
</dbReference>
<dbReference type="InterPro" id="IPR002574">
    <property type="entry name" value="M_CoV"/>
</dbReference>
<dbReference type="Pfam" id="PF01635">
    <property type="entry name" value="CoV_M"/>
    <property type="match status" value="1"/>
</dbReference>
<dbReference type="PROSITE" id="PS51927">
    <property type="entry name" value="COV_M"/>
    <property type="match status" value="1"/>
</dbReference>
<evidence type="ECO:0000255" key="1">
    <source>
        <dbReference type="HAMAP-Rule" id="MF_04203"/>
    </source>
</evidence>
<evidence type="ECO:0000255" key="2">
    <source>
        <dbReference type="PROSITE-ProRule" id="PRU01275"/>
    </source>
</evidence>
<feature type="chain" id="PRO_0000106050" description="Membrane protein">
    <location>
        <begin position="1"/>
        <end position="225"/>
    </location>
</feature>
<feature type="topological domain" description="Virion surface" evidence="1">
    <location>
        <begin position="1"/>
        <end position="20"/>
    </location>
</feature>
<feature type="transmembrane region" description="Helical" evidence="1">
    <location>
        <begin position="21"/>
        <end position="41"/>
    </location>
</feature>
<feature type="topological domain" description="Intravirion" evidence="1">
    <location>
        <begin position="42"/>
        <end position="51"/>
    </location>
</feature>
<feature type="transmembrane region" description="Helical" evidence="1">
    <location>
        <begin position="52"/>
        <end position="72"/>
    </location>
</feature>
<feature type="topological domain" description="Virion surface" evidence="1">
    <location>
        <begin position="73"/>
        <end position="77"/>
    </location>
</feature>
<feature type="transmembrane region" description="Helical" evidence="1">
    <location>
        <begin position="78"/>
        <end position="98"/>
    </location>
</feature>
<feature type="topological domain" description="Intravirion" evidence="1">
    <location>
        <begin position="99"/>
        <end position="225"/>
    </location>
</feature>
<proteinExistence type="inferred from homology"/>
<keyword id="KW-0325">Glycoprotein</keyword>
<keyword id="KW-1040">Host Golgi apparatus</keyword>
<keyword id="KW-1043">Host membrane</keyword>
<keyword id="KW-0472">Membrane</keyword>
<keyword id="KW-0812">Transmembrane</keyword>
<keyword id="KW-1133">Transmembrane helix</keyword>
<keyword id="KW-0261">Viral envelope protein</keyword>
<keyword id="KW-0468">Viral matrix protein</keyword>
<keyword id="KW-0946">Virion</keyword>
<accession>Q91QS9</accession>
<comment type="function">
    <text evidence="1 2">Component of the viral envelope that plays a central role in virus morphogenesis and assembly via its interactions with other viral proteins.</text>
</comment>
<comment type="subunit">
    <text evidence="1 2">Homomultimer. Interacts with envelope E protein in the budding compartment of the host cell, which is located between endoplasmic reticulum and the Golgi complex. Forms a complex with HE and S proteins. Interacts with nucleocapsid N protein. This interaction probably participates in RNA packaging into the virus.</text>
</comment>
<comment type="subcellular location">
    <subcellularLocation>
        <location evidence="1">Virion membrane</location>
        <topology evidence="1">Multi-pass membrane protein</topology>
    </subcellularLocation>
    <subcellularLocation>
        <location evidence="1">Host Golgi apparatus membrane</location>
        <topology evidence="1">Multi-pass membrane protein</topology>
    </subcellularLocation>
    <text evidence="1">Largely embedded in the lipid bilayer.</text>
</comment>
<comment type="similarity">
    <text evidence="1">Belongs to the gammacoronaviruses M protein family.</text>
</comment>
<gene>
    <name evidence="1" type="primary">M</name>
</gene>
<organismHost>
    <name type="scientific">Gallus gallus</name>
    <name type="common">Chicken</name>
    <dbReference type="NCBI Taxonomy" id="9031"/>
</organismHost>